<evidence type="ECO:0000255" key="1">
    <source>
        <dbReference type="HAMAP-Rule" id="MF_01852"/>
    </source>
</evidence>
<evidence type="ECO:0000256" key="2">
    <source>
        <dbReference type="SAM" id="MobiDB-lite"/>
    </source>
</evidence>
<sequence>MKNFEQVLKALQTGEVIAYPTEGVFGVGCDPDNPEAIQKLLELKQRPVEKGLILIAASYEQLLPYIDESQLTQEQLDQVHATWPGPYTWIMPASDKVSHWVSGQFDSIAVRVTDHPLVQKMCNAFGKPLTSTSANLTGQPPCMTTEEVEEQLGDRLVAILRGETSGRNKPSEIRDAKTSQILRQG</sequence>
<accession>A7N129</accession>
<keyword id="KW-0067">ATP-binding</keyword>
<keyword id="KW-0963">Cytoplasm</keyword>
<keyword id="KW-0547">Nucleotide-binding</keyword>
<keyword id="KW-0548">Nucleotidyltransferase</keyword>
<keyword id="KW-0808">Transferase</keyword>
<keyword id="KW-0819">tRNA processing</keyword>
<gene>
    <name evidence="1" type="primary">tsaC</name>
    <name type="synonym">rimN</name>
    <name type="ordered locus">VIBHAR_00384</name>
</gene>
<feature type="chain" id="PRO_0000353004" description="Threonylcarbamoyl-AMP synthase">
    <location>
        <begin position="1"/>
        <end position="185"/>
    </location>
</feature>
<feature type="domain" description="YrdC-like" evidence="1">
    <location>
        <begin position="1"/>
        <end position="185"/>
    </location>
</feature>
<feature type="region of interest" description="Disordered" evidence="2">
    <location>
        <begin position="163"/>
        <end position="185"/>
    </location>
</feature>
<feature type="compositionally biased region" description="Basic and acidic residues" evidence="2">
    <location>
        <begin position="164"/>
        <end position="177"/>
    </location>
</feature>
<dbReference type="EC" id="2.7.7.87" evidence="1"/>
<dbReference type="EMBL" id="CP000789">
    <property type="protein sequence ID" value="ABU69399.1"/>
    <property type="molecule type" value="Genomic_DNA"/>
</dbReference>
<dbReference type="RefSeq" id="WP_012126631.1">
    <property type="nucleotide sequence ID" value="NC_009783.1"/>
</dbReference>
<dbReference type="SMR" id="A7N129"/>
<dbReference type="KEGG" id="vha:VIBHAR_00384"/>
<dbReference type="PATRIC" id="fig|338187.25.peg.2207"/>
<dbReference type="Proteomes" id="UP000008152">
    <property type="component" value="Chromosome I"/>
</dbReference>
<dbReference type="GO" id="GO:0005737">
    <property type="term" value="C:cytoplasm"/>
    <property type="evidence" value="ECO:0007669"/>
    <property type="project" value="UniProtKB-SubCell"/>
</dbReference>
<dbReference type="GO" id="GO:0005524">
    <property type="term" value="F:ATP binding"/>
    <property type="evidence" value="ECO:0007669"/>
    <property type="project" value="UniProtKB-UniRule"/>
</dbReference>
<dbReference type="GO" id="GO:0003725">
    <property type="term" value="F:double-stranded RNA binding"/>
    <property type="evidence" value="ECO:0007669"/>
    <property type="project" value="InterPro"/>
</dbReference>
<dbReference type="GO" id="GO:0061710">
    <property type="term" value="F:L-threonylcarbamoyladenylate synthase"/>
    <property type="evidence" value="ECO:0007669"/>
    <property type="project" value="UniProtKB-EC"/>
</dbReference>
<dbReference type="GO" id="GO:0000049">
    <property type="term" value="F:tRNA binding"/>
    <property type="evidence" value="ECO:0007669"/>
    <property type="project" value="TreeGrafter"/>
</dbReference>
<dbReference type="GO" id="GO:0006450">
    <property type="term" value="P:regulation of translational fidelity"/>
    <property type="evidence" value="ECO:0007669"/>
    <property type="project" value="TreeGrafter"/>
</dbReference>
<dbReference type="GO" id="GO:0002949">
    <property type="term" value="P:tRNA threonylcarbamoyladenosine modification"/>
    <property type="evidence" value="ECO:0007669"/>
    <property type="project" value="UniProtKB-UniRule"/>
</dbReference>
<dbReference type="FunFam" id="3.90.870.10:FF:000004">
    <property type="entry name" value="Threonylcarbamoyl-AMP synthase"/>
    <property type="match status" value="1"/>
</dbReference>
<dbReference type="Gene3D" id="3.90.870.10">
    <property type="entry name" value="DHBP synthase"/>
    <property type="match status" value="1"/>
</dbReference>
<dbReference type="HAMAP" id="MF_01852">
    <property type="entry name" value="TsaC"/>
    <property type="match status" value="1"/>
</dbReference>
<dbReference type="InterPro" id="IPR017945">
    <property type="entry name" value="DHBP_synth_RibB-like_a/b_dom"/>
</dbReference>
<dbReference type="InterPro" id="IPR006070">
    <property type="entry name" value="Sua5-like_dom"/>
</dbReference>
<dbReference type="InterPro" id="IPR023535">
    <property type="entry name" value="TC-AMP_synthase"/>
</dbReference>
<dbReference type="InterPro" id="IPR050156">
    <property type="entry name" value="TC-AMP_synthase_SUA5"/>
</dbReference>
<dbReference type="NCBIfam" id="TIGR00057">
    <property type="entry name" value="L-threonylcarbamoyladenylate synthase"/>
    <property type="match status" value="1"/>
</dbReference>
<dbReference type="PANTHER" id="PTHR17490">
    <property type="entry name" value="SUA5"/>
    <property type="match status" value="1"/>
</dbReference>
<dbReference type="PANTHER" id="PTHR17490:SF18">
    <property type="entry name" value="THREONYLCARBAMOYL-AMP SYNTHASE"/>
    <property type="match status" value="1"/>
</dbReference>
<dbReference type="Pfam" id="PF01300">
    <property type="entry name" value="Sua5_yciO_yrdC"/>
    <property type="match status" value="1"/>
</dbReference>
<dbReference type="SUPFAM" id="SSF55821">
    <property type="entry name" value="YrdC/RibB"/>
    <property type="match status" value="1"/>
</dbReference>
<dbReference type="PROSITE" id="PS51163">
    <property type="entry name" value="YRDC"/>
    <property type="match status" value="1"/>
</dbReference>
<proteinExistence type="inferred from homology"/>
<comment type="function">
    <text evidence="1">Required for the formation of a threonylcarbamoyl group on adenosine at position 37 (t(6)A37) in tRNAs that read codons beginning with adenine. Catalyzes the conversion of L-threonine, HCO(3)(-)/CO(2) and ATP to give threonylcarbamoyl-AMP (TC-AMP) as the acyladenylate intermediate, with the release of diphosphate.</text>
</comment>
<comment type="catalytic activity">
    <reaction evidence="1">
        <text>L-threonine + hydrogencarbonate + ATP = L-threonylcarbamoyladenylate + diphosphate + H2O</text>
        <dbReference type="Rhea" id="RHEA:36407"/>
        <dbReference type="ChEBI" id="CHEBI:15377"/>
        <dbReference type="ChEBI" id="CHEBI:17544"/>
        <dbReference type="ChEBI" id="CHEBI:30616"/>
        <dbReference type="ChEBI" id="CHEBI:33019"/>
        <dbReference type="ChEBI" id="CHEBI:57926"/>
        <dbReference type="ChEBI" id="CHEBI:73682"/>
        <dbReference type="EC" id="2.7.7.87"/>
    </reaction>
</comment>
<comment type="subcellular location">
    <subcellularLocation>
        <location evidence="1">Cytoplasm</location>
    </subcellularLocation>
</comment>
<comment type="similarity">
    <text evidence="1">Belongs to the SUA5 family. TsaC subfamily.</text>
</comment>
<name>TSAC_VIBC1</name>
<organism>
    <name type="scientific">Vibrio campbellii (strain ATCC BAA-1116)</name>
    <dbReference type="NCBI Taxonomy" id="2902295"/>
    <lineage>
        <taxon>Bacteria</taxon>
        <taxon>Pseudomonadati</taxon>
        <taxon>Pseudomonadota</taxon>
        <taxon>Gammaproteobacteria</taxon>
        <taxon>Vibrionales</taxon>
        <taxon>Vibrionaceae</taxon>
        <taxon>Vibrio</taxon>
    </lineage>
</organism>
<reference key="1">
    <citation type="submission" date="2007-08" db="EMBL/GenBank/DDBJ databases">
        <authorList>
            <consortium name="The Vibrio harveyi Genome Sequencing Project"/>
            <person name="Bassler B."/>
            <person name="Clifton S.W."/>
            <person name="Fulton L."/>
            <person name="Delehaunty K."/>
            <person name="Fronick C."/>
            <person name="Harrison M."/>
            <person name="Markivic C."/>
            <person name="Fulton R."/>
            <person name="Tin-Wollam A.-M."/>
            <person name="Shah N."/>
            <person name="Pepin K."/>
            <person name="Nash W."/>
            <person name="Thiruvilangam P."/>
            <person name="Bhonagiri V."/>
            <person name="Waters C."/>
            <person name="Tu K.C."/>
            <person name="Irgon J."/>
            <person name="Wilson R.K."/>
        </authorList>
    </citation>
    <scope>NUCLEOTIDE SEQUENCE [LARGE SCALE GENOMIC DNA]</scope>
    <source>
        <strain>ATCC BAA-1116 / BB120</strain>
    </source>
</reference>
<protein>
    <recommendedName>
        <fullName evidence="1">Threonylcarbamoyl-AMP synthase</fullName>
        <shortName evidence="1">TC-AMP synthase</shortName>
        <ecNumber evidence="1">2.7.7.87</ecNumber>
    </recommendedName>
    <alternativeName>
        <fullName evidence="1">L-threonylcarbamoyladenylate synthase</fullName>
    </alternativeName>
    <alternativeName>
        <fullName evidence="1">t(6)A37 threonylcarbamoyladenosine biosynthesis protein TsaC</fullName>
    </alternativeName>
    <alternativeName>
        <fullName evidence="1">tRNA threonylcarbamoyladenosine biosynthesis protein TsaC</fullName>
    </alternativeName>
</protein>